<comment type="function">
    <text evidence="1">Attaches a formyl group to the free amino group of methionyl-tRNA(fMet). The formyl group appears to play a dual role in the initiator identity of N-formylmethionyl-tRNA by promoting its recognition by IF2 and preventing the misappropriation of this tRNA by the elongation apparatus.</text>
</comment>
<comment type="catalytic activity">
    <reaction evidence="1">
        <text>L-methionyl-tRNA(fMet) + (6R)-10-formyltetrahydrofolate = N-formyl-L-methionyl-tRNA(fMet) + (6S)-5,6,7,8-tetrahydrofolate + H(+)</text>
        <dbReference type="Rhea" id="RHEA:24380"/>
        <dbReference type="Rhea" id="RHEA-COMP:9952"/>
        <dbReference type="Rhea" id="RHEA-COMP:9953"/>
        <dbReference type="ChEBI" id="CHEBI:15378"/>
        <dbReference type="ChEBI" id="CHEBI:57453"/>
        <dbReference type="ChEBI" id="CHEBI:78530"/>
        <dbReference type="ChEBI" id="CHEBI:78844"/>
        <dbReference type="ChEBI" id="CHEBI:195366"/>
        <dbReference type="EC" id="2.1.2.9"/>
    </reaction>
</comment>
<comment type="similarity">
    <text evidence="1">Belongs to the Fmt family.</text>
</comment>
<sequence>MKPLRLAFAGTPDFAAASLQAVLDNGHQVVAVLTQPDRAAGRGKKLQQSPVKQLAHSQGITVLQPENLKGEAIHQQLRDLNLDALVVVAYGLIIPQAVLDMPRLGCLNVHGSLLPRWRGAAPIQRAITAGDTETGNTIMQMEAGLDTGPMLLSESLPIGDSETGGELHDRLAAQGARLLVTVLQDLEKYLANATPQPDEGITYAHKLSKAEARLDFRLPTGALYNRIRAFNPFPVSWVPLNGQPMRIWRASESPQPAQANDEPGYILSVDDQGIHVATGDGSLILEELQLPGKRRMAVSDLLRGNPTLFSVGEPLGDAIINESGDHSGNA</sequence>
<gene>
    <name evidence="1" type="primary">fmt</name>
    <name type="ordered locus">ABO_0130</name>
</gene>
<proteinExistence type="inferred from homology"/>
<keyword id="KW-0648">Protein biosynthesis</keyword>
<keyword id="KW-1185">Reference proteome</keyword>
<keyword id="KW-0808">Transferase</keyword>
<protein>
    <recommendedName>
        <fullName evidence="1">Methionyl-tRNA formyltransferase</fullName>
        <ecNumber evidence="1">2.1.2.9</ecNumber>
    </recommendedName>
</protein>
<evidence type="ECO:0000255" key="1">
    <source>
        <dbReference type="HAMAP-Rule" id="MF_00182"/>
    </source>
</evidence>
<reference key="1">
    <citation type="journal article" date="2006" name="Nat. Biotechnol.">
        <title>Genome sequence of the ubiquitous hydrocarbon-degrading marine bacterium Alcanivorax borkumensis.</title>
        <authorList>
            <person name="Schneiker S."/>
            <person name="Martins dos Santos V.A.P."/>
            <person name="Bartels D."/>
            <person name="Bekel T."/>
            <person name="Brecht M."/>
            <person name="Buhrmester J."/>
            <person name="Chernikova T.N."/>
            <person name="Denaro R."/>
            <person name="Ferrer M."/>
            <person name="Gertler C."/>
            <person name="Goesmann A."/>
            <person name="Golyshina O.V."/>
            <person name="Kaminski F."/>
            <person name="Khachane A.N."/>
            <person name="Lang S."/>
            <person name="Linke B."/>
            <person name="McHardy A.C."/>
            <person name="Meyer F."/>
            <person name="Nechitaylo T."/>
            <person name="Puehler A."/>
            <person name="Regenhardt D."/>
            <person name="Rupp O."/>
            <person name="Sabirova J.S."/>
            <person name="Selbitschka W."/>
            <person name="Yakimov M.M."/>
            <person name="Timmis K.N."/>
            <person name="Vorhoelter F.-J."/>
            <person name="Weidner S."/>
            <person name="Kaiser O."/>
            <person name="Golyshin P.N."/>
        </authorList>
    </citation>
    <scope>NUCLEOTIDE SEQUENCE [LARGE SCALE GENOMIC DNA]</scope>
    <source>
        <strain>ATCC 700651 / DSM 11573 / NCIMB 13689 / SK2</strain>
    </source>
</reference>
<feature type="chain" id="PRO_1000020012" description="Methionyl-tRNA formyltransferase">
    <location>
        <begin position="1"/>
        <end position="330"/>
    </location>
</feature>
<feature type="binding site" evidence="1">
    <location>
        <begin position="112"/>
        <end position="115"/>
    </location>
    <ligand>
        <name>(6S)-5,6,7,8-tetrahydrofolate</name>
        <dbReference type="ChEBI" id="CHEBI:57453"/>
    </ligand>
</feature>
<accession>Q0VTE2</accession>
<organism>
    <name type="scientific">Alcanivorax borkumensis (strain ATCC 700651 / DSM 11573 / NCIMB 13689 / SK2)</name>
    <dbReference type="NCBI Taxonomy" id="393595"/>
    <lineage>
        <taxon>Bacteria</taxon>
        <taxon>Pseudomonadati</taxon>
        <taxon>Pseudomonadota</taxon>
        <taxon>Gammaproteobacteria</taxon>
        <taxon>Oceanospirillales</taxon>
        <taxon>Alcanivoracaceae</taxon>
        <taxon>Alcanivorax</taxon>
    </lineage>
</organism>
<name>FMT_ALCBS</name>
<dbReference type="EC" id="2.1.2.9" evidence="1"/>
<dbReference type="EMBL" id="AM286690">
    <property type="protein sequence ID" value="CAL15578.1"/>
    <property type="molecule type" value="Genomic_DNA"/>
</dbReference>
<dbReference type="RefSeq" id="WP_011587428.1">
    <property type="nucleotide sequence ID" value="NC_008260.1"/>
</dbReference>
<dbReference type="SMR" id="Q0VTE2"/>
<dbReference type="STRING" id="393595.ABO_0130"/>
<dbReference type="KEGG" id="abo:ABO_0130"/>
<dbReference type="eggNOG" id="COG0223">
    <property type="taxonomic scope" value="Bacteria"/>
</dbReference>
<dbReference type="HOGENOM" id="CLU_033347_1_2_6"/>
<dbReference type="OrthoDB" id="9802815at2"/>
<dbReference type="Proteomes" id="UP000008871">
    <property type="component" value="Chromosome"/>
</dbReference>
<dbReference type="GO" id="GO:0005829">
    <property type="term" value="C:cytosol"/>
    <property type="evidence" value="ECO:0007669"/>
    <property type="project" value="TreeGrafter"/>
</dbReference>
<dbReference type="GO" id="GO:0004479">
    <property type="term" value="F:methionyl-tRNA formyltransferase activity"/>
    <property type="evidence" value="ECO:0007669"/>
    <property type="project" value="UniProtKB-UniRule"/>
</dbReference>
<dbReference type="CDD" id="cd08646">
    <property type="entry name" value="FMT_core_Met-tRNA-FMT_N"/>
    <property type="match status" value="1"/>
</dbReference>
<dbReference type="CDD" id="cd08704">
    <property type="entry name" value="Met_tRNA_FMT_C"/>
    <property type="match status" value="1"/>
</dbReference>
<dbReference type="FunFam" id="3.40.50.12230:FF:000001">
    <property type="entry name" value="Methionyl-tRNA formyltransferase"/>
    <property type="match status" value="1"/>
</dbReference>
<dbReference type="Gene3D" id="3.10.25.10">
    <property type="entry name" value="Formyl transferase, C-terminal domain"/>
    <property type="match status" value="1"/>
</dbReference>
<dbReference type="Gene3D" id="3.40.50.170">
    <property type="entry name" value="Formyl transferase, N-terminal domain"/>
    <property type="match status" value="1"/>
</dbReference>
<dbReference type="HAMAP" id="MF_00182">
    <property type="entry name" value="Formyl_trans"/>
    <property type="match status" value="1"/>
</dbReference>
<dbReference type="InterPro" id="IPR005794">
    <property type="entry name" value="Fmt"/>
</dbReference>
<dbReference type="InterPro" id="IPR005793">
    <property type="entry name" value="Formyl_trans_C"/>
</dbReference>
<dbReference type="InterPro" id="IPR037022">
    <property type="entry name" value="Formyl_trans_C_sf"/>
</dbReference>
<dbReference type="InterPro" id="IPR002376">
    <property type="entry name" value="Formyl_transf_N"/>
</dbReference>
<dbReference type="InterPro" id="IPR036477">
    <property type="entry name" value="Formyl_transf_N_sf"/>
</dbReference>
<dbReference type="InterPro" id="IPR011034">
    <property type="entry name" value="Formyl_transferase-like_C_sf"/>
</dbReference>
<dbReference type="InterPro" id="IPR001555">
    <property type="entry name" value="GART_AS"/>
</dbReference>
<dbReference type="InterPro" id="IPR044135">
    <property type="entry name" value="Met-tRNA-FMT_C"/>
</dbReference>
<dbReference type="InterPro" id="IPR041711">
    <property type="entry name" value="Met-tRNA-FMT_N"/>
</dbReference>
<dbReference type="NCBIfam" id="TIGR00460">
    <property type="entry name" value="fmt"/>
    <property type="match status" value="1"/>
</dbReference>
<dbReference type="PANTHER" id="PTHR11138">
    <property type="entry name" value="METHIONYL-TRNA FORMYLTRANSFERASE"/>
    <property type="match status" value="1"/>
</dbReference>
<dbReference type="PANTHER" id="PTHR11138:SF5">
    <property type="entry name" value="METHIONYL-TRNA FORMYLTRANSFERASE, MITOCHONDRIAL"/>
    <property type="match status" value="1"/>
</dbReference>
<dbReference type="Pfam" id="PF02911">
    <property type="entry name" value="Formyl_trans_C"/>
    <property type="match status" value="1"/>
</dbReference>
<dbReference type="Pfam" id="PF00551">
    <property type="entry name" value="Formyl_trans_N"/>
    <property type="match status" value="1"/>
</dbReference>
<dbReference type="SUPFAM" id="SSF50486">
    <property type="entry name" value="FMT C-terminal domain-like"/>
    <property type="match status" value="1"/>
</dbReference>
<dbReference type="SUPFAM" id="SSF53328">
    <property type="entry name" value="Formyltransferase"/>
    <property type="match status" value="1"/>
</dbReference>
<dbReference type="PROSITE" id="PS00373">
    <property type="entry name" value="GART"/>
    <property type="match status" value="1"/>
</dbReference>